<proteinExistence type="inferred from homology"/>
<sequence length="459" mass="50686">MSLRIYNTLSRAIEPLIPLQPGHVRMYVCGMTVYDLCHLGHARAMVAFDVVQRWLKVSGLRVTYVRNVTDIDDKIIKRALENGESIRALTERMVDALHQDADALGIERPTHEPRATEFVPQMLSLIGRLEQKGLAYQAVNGDVNYAVRKFPGYGKLSGKSLDELRAGERVAVADGKDDPLDFVLWKTAKPNEPLDAKWDSVYGQGRPGWHIECSAMCGQMLGETVDIHGGGADLQFPHHENEIAQSEGATGKPLASIWMHNGFVTRDNEKMSKSLGNFFTIRDILARYDAETTRFFIIRAHYRSALNHSDAHLDDARNSLKRLYTALDLVAPEPLLEIDWRQPFAARFKAAMDEDFGTPEAVAVMFELATEVNKTRDPKLAGLLKALGACLGLLQGDPKVFLQAGATLDAASIAALIAQRTAAKAAKNFAEADRIRQDLLARGIVLKDSAAGTVWEVVA</sequence>
<comment type="catalytic activity">
    <reaction evidence="1">
        <text>tRNA(Cys) + L-cysteine + ATP = L-cysteinyl-tRNA(Cys) + AMP + diphosphate</text>
        <dbReference type="Rhea" id="RHEA:17773"/>
        <dbReference type="Rhea" id="RHEA-COMP:9661"/>
        <dbReference type="Rhea" id="RHEA-COMP:9679"/>
        <dbReference type="ChEBI" id="CHEBI:30616"/>
        <dbReference type="ChEBI" id="CHEBI:33019"/>
        <dbReference type="ChEBI" id="CHEBI:35235"/>
        <dbReference type="ChEBI" id="CHEBI:78442"/>
        <dbReference type="ChEBI" id="CHEBI:78517"/>
        <dbReference type="ChEBI" id="CHEBI:456215"/>
        <dbReference type="EC" id="6.1.1.16"/>
    </reaction>
</comment>
<comment type="cofactor">
    <cofactor evidence="1">
        <name>Zn(2+)</name>
        <dbReference type="ChEBI" id="CHEBI:29105"/>
    </cofactor>
    <text evidence="1">Binds 1 zinc ion per subunit.</text>
</comment>
<comment type="subunit">
    <text evidence="1">Monomer.</text>
</comment>
<comment type="subcellular location">
    <subcellularLocation>
        <location evidence="1">Cytoplasm</location>
    </subcellularLocation>
</comment>
<comment type="similarity">
    <text evidence="1">Belongs to the class-I aminoacyl-tRNA synthetase family.</text>
</comment>
<comment type="sequence caution" evidence="2">
    <conflict type="erroneous initiation">
        <sequence resource="EMBL-CDS" id="ABD69083"/>
    </conflict>
</comment>
<evidence type="ECO:0000255" key="1">
    <source>
        <dbReference type="HAMAP-Rule" id="MF_00041"/>
    </source>
</evidence>
<evidence type="ECO:0000305" key="2"/>
<accession>Q21YS0</accession>
<protein>
    <recommendedName>
        <fullName evidence="1">Cysteine--tRNA ligase</fullName>
        <ecNumber evidence="1">6.1.1.16</ecNumber>
    </recommendedName>
    <alternativeName>
        <fullName evidence="1">Cysteinyl-tRNA synthetase</fullName>
        <shortName evidence="1">CysRS</shortName>
    </alternativeName>
</protein>
<reference key="1">
    <citation type="submission" date="2006-02" db="EMBL/GenBank/DDBJ databases">
        <title>Complete sequence of chromosome of Rhodoferax ferrireducens DSM 15236.</title>
        <authorList>
            <person name="Copeland A."/>
            <person name="Lucas S."/>
            <person name="Lapidus A."/>
            <person name="Barry K."/>
            <person name="Detter J.C."/>
            <person name="Glavina del Rio T."/>
            <person name="Hammon N."/>
            <person name="Israni S."/>
            <person name="Pitluck S."/>
            <person name="Brettin T."/>
            <person name="Bruce D."/>
            <person name="Han C."/>
            <person name="Tapia R."/>
            <person name="Gilna P."/>
            <person name="Kiss H."/>
            <person name="Schmutz J."/>
            <person name="Larimer F."/>
            <person name="Land M."/>
            <person name="Kyrpides N."/>
            <person name="Ivanova N."/>
            <person name="Richardson P."/>
        </authorList>
    </citation>
    <scope>NUCLEOTIDE SEQUENCE [LARGE SCALE GENOMIC DNA]</scope>
    <source>
        <strain>ATCC BAA-621 / DSM 15236 / T118</strain>
    </source>
</reference>
<gene>
    <name evidence="1" type="primary">cysS</name>
    <name type="ordered locus">Rfer_1349</name>
</gene>
<feature type="chain" id="PRO_0000240945" description="Cysteine--tRNA ligase">
    <location>
        <begin position="1"/>
        <end position="459"/>
    </location>
</feature>
<feature type="short sequence motif" description="'HIGH' region">
    <location>
        <begin position="31"/>
        <end position="41"/>
    </location>
</feature>
<feature type="short sequence motif" description="'KMSKS' region">
    <location>
        <begin position="270"/>
        <end position="274"/>
    </location>
</feature>
<feature type="binding site" evidence="1">
    <location>
        <position position="29"/>
    </location>
    <ligand>
        <name>Zn(2+)</name>
        <dbReference type="ChEBI" id="CHEBI:29105"/>
    </ligand>
</feature>
<feature type="binding site" evidence="1">
    <location>
        <position position="213"/>
    </location>
    <ligand>
        <name>Zn(2+)</name>
        <dbReference type="ChEBI" id="CHEBI:29105"/>
    </ligand>
</feature>
<feature type="binding site" evidence="1">
    <location>
        <position position="238"/>
    </location>
    <ligand>
        <name>Zn(2+)</name>
        <dbReference type="ChEBI" id="CHEBI:29105"/>
    </ligand>
</feature>
<feature type="binding site" evidence="1">
    <location>
        <position position="242"/>
    </location>
    <ligand>
        <name>Zn(2+)</name>
        <dbReference type="ChEBI" id="CHEBI:29105"/>
    </ligand>
</feature>
<feature type="binding site" evidence="1">
    <location>
        <position position="273"/>
    </location>
    <ligand>
        <name>ATP</name>
        <dbReference type="ChEBI" id="CHEBI:30616"/>
    </ligand>
</feature>
<keyword id="KW-0030">Aminoacyl-tRNA synthetase</keyword>
<keyword id="KW-0067">ATP-binding</keyword>
<keyword id="KW-0963">Cytoplasm</keyword>
<keyword id="KW-0436">Ligase</keyword>
<keyword id="KW-0479">Metal-binding</keyword>
<keyword id="KW-0547">Nucleotide-binding</keyword>
<keyword id="KW-0648">Protein biosynthesis</keyword>
<keyword id="KW-1185">Reference proteome</keyword>
<keyword id="KW-0862">Zinc</keyword>
<organism>
    <name type="scientific">Albidiferax ferrireducens (strain ATCC BAA-621 / DSM 15236 / T118)</name>
    <name type="common">Rhodoferax ferrireducens</name>
    <dbReference type="NCBI Taxonomy" id="338969"/>
    <lineage>
        <taxon>Bacteria</taxon>
        <taxon>Pseudomonadati</taxon>
        <taxon>Pseudomonadota</taxon>
        <taxon>Betaproteobacteria</taxon>
        <taxon>Burkholderiales</taxon>
        <taxon>Comamonadaceae</taxon>
        <taxon>Rhodoferax</taxon>
    </lineage>
</organism>
<dbReference type="EC" id="6.1.1.16" evidence="1"/>
<dbReference type="EMBL" id="CP000267">
    <property type="protein sequence ID" value="ABD69083.1"/>
    <property type="status" value="ALT_INIT"/>
    <property type="molecule type" value="Genomic_DNA"/>
</dbReference>
<dbReference type="RefSeq" id="WP_041790315.1">
    <property type="nucleotide sequence ID" value="NC_007908.1"/>
</dbReference>
<dbReference type="SMR" id="Q21YS0"/>
<dbReference type="STRING" id="338969.Rfer_1349"/>
<dbReference type="KEGG" id="rfr:Rfer_1349"/>
<dbReference type="eggNOG" id="COG0215">
    <property type="taxonomic scope" value="Bacteria"/>
</dbReference>
<dbReference type="HOGENOM" id="CLU_013528_0_1_4"/>
<dbReference type="OrthoDB" id="9815130at2"/>
<dbReference type="Proteomes" id="UP000008332">
    <property type="component" value="Chromosome"/>
</dbReference>
<dbReference type="GO" id="GO:0005829">
    <property type="term" value="C:cytosol"/>
    <property type="evidence" value="ECO:0007669"/>
    <property type="project" value="TreeGrafter"/>
</dbReference>
<dbReference type="GO" id="GO:0005524">
    <property type="term" value="F:ATP binding"/>
    <property type="evidence" value="ECO:0007669"/>
    <property type="project" value="UniProtKB-UniRule"/>
</dbReference>
<dbReference type="GO" id="GO:0004817">
    <property type="term" value="F:cysteine-tRNA ligase activity"/>
    <property type="evidence" value="ECO:0007669"/>
    <property type="project" value="UniProtKB-UniRule"/>
</dbReference>
<dbReference type="GO" id="GO:0008270">
    <property type="term" value="F:zinc ion binding"/>
    <property type="evidence" value="ECO:0007669"/>
    <property type="project" value="UniProtKB-UniRule"/>
</dbReference>
<dbReference type="GO" id="GO:0006423">
    <property type="term" value="P:cysteinyl-tRNA aminoacylation"/>
    <property type="evidence" value="ECO:0007669"/>
    <property type="project" value="UniProtKB-UniRule"/>
</dbReference>
<dbReference type="CDD" id="cd07963">
    <property type="entry name" value="Anticodon_Ia_Cys"/>
    <property type="match status" value="1"/>
</dbReference>
<dbReference type="CDD" id="cd00672">
    <property type="entry name" value="CysRS_core"/>
    <property type="match status" value="1"/>
</dbReference>
<dbReference type="FunFam" id="3.40.50.620:FF:000009">
    <property type="entry name" value="Cysteine--tRNA ligase"/>
    <property type="match status" value="1"/>
</dbReference>
<dbReference type="Gene3D" id="1.20.120.1910">
    <property type="entry name" value="Cysteine-tRNA ligase, C-terminal anti-codon recognition domain"/>
    <property type="match status" value="1"/>
</dbReference>
<dbReference type="Gene3D" id="3.40.50.620">
    <property type="entry name" value="HUPs"/>
    <property type="match status" value="1"/>
</dbReference>
<dbReference type="HAMAP" id="MF_00041">
    <property type="entry name" value="Cys_tRNA_synth"/>
    <property type="match status" value="1"/>
</dbReference>
<dbReference type="InterPro" id="IPR015803">
    <property type="entry name" value="Cys-tRNA-ligase"/>
</dbReference>
<dbReference type="InterPro" id="IPR015273">
    <property type="entry name" value="Cys-tRNA-synt_Ia_DALR"/>
</dbReference>
<dbReference type="InterPro" id="IPR024909">
    <property type="entry name" value="Cys-tRNA/MSH_ligase"/>
</dbReference>
<dbReference type="InterPro" id="IPR056411">
    <property type="entry name" value="CysS_C"/>
</dbReference>
<dbReference type="InterPro" id="IPR014729">
    <property type="entry name" value="Rossmann-like_a/b/a_fold"/>
</dbReference>
<dbReference type="InterPro" id="IPR032678">
    <property type="entry name" value="tRNA-synt_1_cat_dom"/>
</dbReference>
<dbReference type="InterPro" id="IPR009080">
    <property type="entry name" value="tRNAsynth_Ia_anticodon-bd"/>
</dbReference>
<dbReference type="NCBIfam" id="TIGR00435">
    <property type="entry name" value="cysS"/>
    <property type="match status" value="1"/>
</dbReference>
<dbReference type="PANTHER" id="PTHR10890:SF3">
    <property type="entry name" value="CYSTEINE--TRNA LIGASE, CYTOPLASMIC"/>
    <property type="match status" value="1"/>
</dbReference>
<dbReference type="PANTHER" id="PTHR10890">
    <property type="entry name" value="CYSTEINYL-TRNA SYNTHETASE"/>
    <property type="match status" value="1"/>
</dbReference>
<dbReference type="Pfam" id="PF23493">
    <property type="entry name" value="CysS_C"/>
    <property type="match status" value="1"/>
</dbReference>
<dbReference type="Pfam" id="PF09190">
    <property type="entry name" value="DALR_2"/>
    <property type="match status" value="1"/>
</dbReference>
<dbReference type="Pfam" id="PF01406">
    <property type="entry name" value="tRNA-synt_1e"/>
    <property type="match status" value="1"/>
</dbReference>
<dbReference type="PRINTS" id="PR00983">
    <property type="entry name" value="TRNASYNTHCYS"/>
</dbReference>
<dbReference type="SMART" id="SM00840">
    <property type="entry name" value="DALR_2"/>
    <property type="match status" value="1"/>
</dbReference>
<dbReference type="SUPFAM" id="SSF47323">
    <property type="entry name" value="Anticodon-binding domain of a subclass of class I aminoacyl-tRNA synthetases"/>
    <property type="match status" value="1"/>
</dbReference>
<dbReference type="SUPFAM" id="SSF52374">
    <property type="entry name" value="Nucleotidylyl transferase"/>
    <property type="match status" value="1"/>
</dbReference>
<name>SYC_ALBFT</name>